<accession>P18856</accession>
<evidence type="ECO:0000250" key="1"/>
<evidence type="ECO:0000255" key="2"/>
<evidence type="ECO:0000255" key="3">
    <source>
        <dbReference type="PROSITE-ProRule" id="PRU00793"/>
    </source>
</evidence>
<evidence type="ECO:0000256" key="4">
    <source>
        <dbReference type="SAM" id="MobiDB-lite"/>
    </source>
</evidence>
<evidence type="ECO:0000305" key="5"/>
<feature type="chain" id="PRO_0000005710" description="Collagen EMF1-alpha">
    <location>
        <begin position="1" status="less than"/>
        <end position="336"/>
    </location>
</feature>
<feature type="propeptide" id="PRO_0000005711" description="C-terminal propeptide">
    <location>
        <begin position="337"/>
        <end position="547"/>
    </location>
</feature>
<feature type="domain" description="Fibrillar collagen NC1" evidence="3">
    <location>
        <begin position="343"/>
        <end position="547"/>
    </location>
</feature>
<feature type="region of interest" description="Triple-helical region">
    <location>
        <begin position="1" status="less than"/>
        <end position="280"/>
    </location>
</feature>
<feature type="region of interest" description="Disordered" evidence="4">
    <location>
        <begin position="1"/>
        <end position="99"/>
    </location>
</feature>
<feature type="region of interest" description="Disordered" evidence="4">
    <location>
        <begin position="116"/>
        <end position="311"/>
    </location>
</feature>
<feature type="region of interest" description="Telopeptide">
    <location>
        <begin position="308"/>
        <end position="336"/>
    </location>
</feature>
<feature type="compositionally biased region" description="Low complexity" evidence="4">
    <location>
        <begin position="27"/>
        <end position="69"/>
    </location>
</feature>
<feature type="compositionally biased region" description="Low complexity" evidence="4">
    <location>
        <begin position="160"/>
        <end position="175"/>
    </location>
</feature>
<feature type="compositionally biased region" description="Basic and acidic residues" evidence="4">
    <location>
        <begin position="219"/>
        <end position="228"/>
    </location>
</feature>
<feature type="compositionally biased region" description="Low complexity" evidence="4">
    <location>
        <begin position="246"/>
        <end position="271"/>
    </location>
</feature>
<feature type="compositionally biased region" description="Gly residues" evidence="4">
    <location>
        <begin position="272"/>
        <end position="281"/>
    </location>
</feature>
<feature type="modified residue" description="Allysine" evidence="1">
    <location>
        <position position="187"/>
    </location>
</feature>
<feature type="glycosylation site" description="N-linked (GlcNAc...) asparagine" evidence="2">
    <location>
        <position position="381"/>
    </location>
</feature>
<feature type="glycosylation site" description="N-linked (GlcNAc...) asparagine" evidence="2">
    <location>
        <position position="406"/>
    </location>
</feature>
<feature type="non-terminal residue">
    <location>
        <position position="1"/>
    </location>
</feature>
<proteinExistence type="inferred from homology"/>
<dbReference type="EMBL" id="M34640">
    <property type="protein sequence ID" value="AAA29119.1"/>
    <property type="status" value="ALT_INIT"/>
    <property type="molecule type" value="Genomic_DNA"/>
</dbReference>
<dbReference type="PIR" id="A36046">
    <property type="entry name" value="A36046"/>
</dbReference>
<dbReference type="SMR" id="P18856"/>
<dbReference type="GlyCosmos" id="P18856">
    <property type="glycosylation" value="2 sites, No reported glycans"/>
</dbReference>
<dbReference type="GO" id="GO:0005581">
    <property type="term" value="C:collagen trimer"/>
    <property type="evidence" value="ECO:0007669"/>
    <property type="project" value="UniProtKB-KW"/>
</dbReference>
<dbReference type="GO" id="GO:0031012">
    <property type="term" value="C:extracellular matrix"/>
    <property type="evidence" value="ECO:0007669"/>
    <property type="project" value="TreeGrafter"/>
</dbReference>
<dbReference type="GO" id="GO:0005615">
    <property type="term" value="C:extracellular space"/>
    <property type="evidence" value="ECO:0007669"/>
    <property type="project" value="TreeGrafter"/>
</dbReference>
<dbReference type="GO" id="GO:0005201">
    <property type="term" value="F:extracellular matrix structural constituent"/>
    <property type="evidence" value="ECO:0007669"/>
    <property type="project" value="InterPro"/>
</dbReference>
<dbReference type="Gene3D" id="2.60.120.1000">
    <property type="match status" value="1"/>
</dbReference>
<dbReference type="InterPro" id="IPR008160">
    <property type="entry name" value="Collagen"/>
</dbReference>
<dbReference type="InterPro" id="IPR050149">
    <property type="entry name" value="Collagen_superfamily"/>
</dbReference>
<dbReference type="InterPro" id="IPR000885">
    <property type="entry name" value="Fib_collagen_C"/>
</dbReference>
<dbReference type="PANTHER" id="PTHR24023">
    <property type="entry name" value="COLLAGEN ALPHA"/>
    <property type="match status" value="1"/>
</dbReference>
<dbReference type="PANTHER" id="PTHR24023:SF1082">
    <property type="entry name" value="COLLAGEN TRIPLE HELIX REPEAT"/>
    <property type="match status" value="1"/>
</dbReference>
<dbReference type="Pfam" id="PF01410">
    <property type="entry name" value="COLFI"/>
    <property type="match status" value="1"/>
</dbReference>
<dbReference type="Pfam" id="PF01391">
    <property type="entry name" value="Collagen"/>
    <property type="match status" value="3"/>
</dbReference>
<dbReference type="SMART" id="SM00038">
    <property type="entry name" value="COLFI"/>
    <property type="match status" value="1"/>
</dbReference>
<dbReference type="PROSITE" id="PS51461">
    <property type="entry name" value="NC1_FIB"/>
    <property type="match status" value="1"/>
</dbReference>
<keyword id="KW-0176">Collagen</keyword>
<keyword id="KW-0272">Extracellular matrix</keyword>
<keyword id="KW-0325">Glycoprotein</keyword>
<keyword id="KW-0379">Hydroxylation</keyword>
<keyword id="KW-0677">Repeat</keyword>
<keyword id="KW-0964">Secreted</keyword>
<name>CAF1_EPHMU</name>
<sequence length="547" mass="53532">GVPGPNGDVGPAGPTGPAGLDGAPGAQGPDGEPGLPGLPGQSGKSGASGQPGVPGPVGAAGKPGSIRGQPGPPGPPGDLGRPGERGAKGVRGTPGAPGVDGVAGIAGAIGFPGPMGPDGAAGPSGYPGFDGVAGKPGPQGAMGPKGQAGERGPQGTPGTQGSKGVVGPKGVVGPQGDSGDTGDAGQKGARGTAGSVGAKGTVGLPGNQGPQGPAGLKGVKGEKGEVGDKGILGPDGDKGPTGMSGDAGPAGPIGDAGIQGPPGQDGPTGAQGPRGGQGPKGPAGAVGDVGDRGSTGPAGPPGPPGPTGGGIILVPVNDQNPTRSPVSGSVFYRGQAEETDVNLGSVADVIELHKKLQHLKSPTGTKDSPARSCHDLFLEDNSTSDGYYWIDPNGGCIGDAVKVFCNFTGGVQQTCISATKNAGDLKSWSGHSIWFSDMLGGFKLTYDISRSQLQFIRAASRHAVQSFTYKCRNSAAAVIFRTQDNKEIAANKVTYDGCKSRPSVPDAAFVAVETKRVEQLPIRDFASSDIAGQHQEFGFEMGPACFY</sequence>
<organism>
    <name type="scientific">Ephydatia muelleri</name>
    <name type="common">Mueller's freshwater sponge</name>
    <name type="synonym">Spongilla muelleri</name>
    <dbReference type="NCBI Taxonomy" id="6052"/>
    <lineage>
        <taxon>Eukaryota</taxon>
        <taxon>Metazoa</taxon>
        <taxon>Porifera</taxon>
        <taxon>Demospongiae</taxon>
        <taxon>Heteroscleromorpha</taxon>
        <taxon>Spongillida</taxon>
        <taxon>Spongillidae</taxon>
        <taxon>Ephydatia</taxon>
    </lineage>
</organism>
<protein>
    <recommendedName>
        <fullName>Collagen EMF1-alpha</fullName>
    </recommendedName>
    <alternativeName>
        <fullName>Fibrillar collagen</fullName>
    </alternativeName>
</protein>
<reference key="1">
    <citation type="journal article" date="1990" name="Proc. Natl. Acad. Sci. U.S.A.">
        <title>Characterization of a fibrillar collagen gene in sponges reveals the early evolutionary appearance of two collagen gene families.</title>
        <authorList>
            <person name="Exposito J.-Y."/>
            <person name="Garrone R."/>
        </authorList>
    </citation>
    <scope>NUCLEOTIDE SEQUENCE [GENOMIC DNA]</scope>
</reference>
<gene>
    <name type="primary">COLF1</name>
</gene>
<comment type="subcellular location">
    <subcellularLocation>
        <location>Secreted</location>
        <location>Extracellular space</location>
        <location>Extracellular matrix</location>
    </subcellularLocation>
</comment>
<comment type="similarity">
    <text evidence="3">Belongs to the fibrillar collagen family.</text>
</comment>
<comment type="sequence caution" evidence="5">
    <conflict type="erroneous initiation">
        <sequence resource="EMBL-CDS" id="AAA29119"/>
    </conflict>
</comment>